<feature type="chain" id="PRO_0000070925" description="Chaperone protein DnaJ">
    <location>
        <begin position="1"/>
        <end position="348"/>
    </location>
</feature>
<feature type="domain" description="J" evidence="1">
    <location>
        <begin position="3"/>
        <end position="65"/>
    </location>
</feature>
<feature type="repeat" description="CXXCXGXG motif">
    <location>
        <begin position="122"/>
        <end position="129"/>
    </location>
</feature>
<feature type="repeat" description="CXXCXGXG motif">
    <location>
        <begin position="139"/>
        <end position="146"/>
    </location>
</feature>
<feature type="repeat" description="CXXCXGXG motif">
    <location>
        <begin position="165"/>
        <end position="172"/>
    </location>
</feature>
<feature type="repeat" description="CXXCXGXG motif">
    <location>
        <begin position="179"/>
        <end position="186"/>
    </location>
</feature>
<feature type="zinc finger region" description="CR-type" evidence="1">
    <location>
        <begin position="109"/>
        <end position="191"/>
    </location>
</feature>
<feature type="binding site" evidence="1">
    <location>
        <position position="122"/>
    </location>
    <ligand>
        <name>Zn(2+)</name>
        <dbReference type="ChEBI" id="CHEBI:29105"/>
        <label>1</label>
    </ligand>
</feature>
<feature type="binding site" evidence="1">
    <location>
        <position position="125"/>
    </location>
    <ligand>
        <name>Zn(2+)</name>
        <dbReference type="ChEBI" id="CHEBI:29105"/>
        <label>1</label>
    </ligand>
</feature>
<feature type="binding site" evidence="1">
    <location>
        <position position="139"/>
    </location>
    <ligand>
        <name>Zn(2+)</name>
        <dbReference type="ChEBI" id="CHEBI:29105"/>
        <label>2</label>
    </ligand>
</feature>
<feature type="binding site" evidence="1">
    <location>
        <position position="142"/>
    </location>
    <ligand>
        <name>Zn(2+)</name>
        <dbReference type="ChEBI" id="CHEBI:29105"/>
        <label>2</label>
    </ligand>
</feature>
<feature type="binding site" evidence="1">
    <location>
        <position position="165"/>
    </location>
    <ligand>
        <name>Zn(2+)</name>
        <dbReference type="ChEBI" id="CHEBI:29105"/>
        <label>2</label>
    </ligand>
</feature>
<feature type="binding site" evidence="1">
    <location>
        <position position="168"/>
    </location>
    <ligand>
        <name>Zn(2+)</name>
        <dbReference type="ChEBI" id="CHEBI:29105"/>
        <label>2</label>
    </ligand>
</feature>
<feature type="binding site" evidence="1">
    <location>
        <position position="179"/>
    </location>
    <ligand>
        <name>Zn(2+)</name>
        <dbReference type="ChEBI" id="CHEBI:29105"/>
        <label>1</label>
    </ligand>
</feature>
<feature type="binding site" evidence="1">
    <location>
        <position position="182"/>
    </location>
    <ligand>
        <name>Zn(2+)</name>
        <dbReference type="ChEBI" id="CHEBI:29105"/>
        <label>1</label>
    </ligand>
</feature>
<keyword id="KW-0143">Chaperone</keyword>
<keyword id="KW-0963">Cytoplasm</keyword>
<keyword id="KW-0235">DNA replication</keyword>
<keyword id="KW-0479">Metal-binding</keyword>
<keyword id="KW-1185">Reference proteome</keyword>
<keyword id="KW-0677">Repeat</keyword>
<keyword id="KW-0346">Stress response</keyword>
<keyword id="KW-0862">Zinc</keyword>
<keyword id="KW-0863">Zinc-finger</keyword>
<dbReference type="EMBL" id="AE014184">
    <property type="protein sequence ID" value="AAO44377.1"/>
    <property type="molecule type" value="Genomic_DNA"/>
</dbReference>
<dbReference type="RefSeq" id="WP_011102477.1">
    <property type="nucleotide sequence ID" value="NC_004572.3"/>
</dbReference>
<dbReference type="SMR" id="Q83MZ4"/>
<dbReference type="STRING" id="203267.TWT_280"/>
<dbReference type="KEGG" id="twh:TWT_280"/>
<dbReference type="eggNOG" id="COG0484">
    <property type="taxonomic scope" value="Bacteria"/>
</dbReference>
<dbReference type="HOGENOM" id="CLU_728707_0_0_11"/>
<dbReference type="OrthoDB" id="9779889at2"/>
<dbReference type="Proteomes" id="UP000002200">
    <property type="component" value="Chromosome"/>
</dbReference>
<dbReference type="GO" id="GO:0005737">
    <property type="term" value="C:cytoplasm"/>
    <property type="evidence" value="ECO:0007669"/>
    <property type="project" value="UniProtKB-SubCell"/>
</dbReference>
<dbReference type="GO" id="GO:0005524">
    <property type="term" value="F:ATP binding"/>
    <property type="evidence" value="ECO:0007669"/>
    <property type="project" value="InterPro"/>
</dbReference>
<dbReference type="GO" id="GO:0031072">
    <property type="term" value="F:heat shock protein binding"/>
    <property type="evidence" value="ECO:0007669"/>
    <property type="project" value="InterPro"/>
</dbReference>
<dbReference type="GO" id="GO:0051082">
    <property type="term" value="F:unfolded protein binding"/>
    <property type="evidence" value="ECO:0007669"/>
    <property type="project" value="UniProtKB-UniRule"/>
</dbReference>
<dbReference type="GO" id="GO:0008270">
    <property type="term" value="F:zinc ion binding"/>
    <property type="evidence" value="ECO:0007669"/>
    <property type="project" value="UniProtKB-UniRule"/>
</dbReference>
<dbReference type="GO" id="GO:0051085">
    <property type="term" value="P:chaperone cofactor-dependent protein refolding"/>
    <property type="evidence" value="ECO:0007669"/>
    <property type="project" value="TreeGrafter"/>
</dbReference>
<dbReference type="GO" id="GO:0006260">
    <property type="term" value="P:DNA replication"/>
    <property type="evidence" value="ECO:0007669"/>
    <property type="project" value="UniProtKB-KW"/>
</dbReference>
<dbReference type="GO" id="GO:0042026">
    <property type="term" value="P:protein refolding"/>
    <property type="evidence" value="ECO:0007669"/>
    <property type="project" value="TreeGrafter"/>
</dbReference>
<dbReference type="GO" id="GO:0009408">
    <property type="term" value="P:response to heat"/>
    <property type="evidence" value="ECO:0007669"/>
    <property type="project" value="InterPro"/>
</dbReference>
<dbReference type="CDD" id="cd06257">
    <property type="entry name" value="DnaJ"/>
    <property type="match status" value="1"/>
</dbReference>
<dbReference type="CDD" id="cd10747">
    <property type="entry name" value="DnaJ_C"/>
    <property type="match status" value="1"/>
</dbReference>
<dbReference type="CDD" id="cd10719">
    <property type="entry name" value="DnaJ_zf"/>
    <property type="match status" value="1"/>
</dbReference>
<dbReference type="FunFam" id="2.10.230.10:FF:000002">
    <property type="entry name" value="Molecular chaperone DnaJ"/>
    <property type="match status" value="1"/>
</dbReference>
<dbReference type="Gene3D" id="1.10.287.110">
    <property type="entry name" value="DnaJ domain"/>
    <property type="match status" value="1"/>
</dbReference>
<dbReference type="Gene3D" id="2.10.230.10">
    <property type="entry name" value="Heat shock protein DnaJ, cysteine-rich domain"/>
    <property type="match status" value="1"/>
</dbReference>
<dbReference type="Gene3D" id="2.60.260.20">
    <property type="entry name" value="Urease metallochaperone UreE, N-terminal domain"/>
    <property type="match status" value="2"/>
</dbReference>
<dbReference type="HAMAP" id="MF_01152">
    <property type="entry name" value="DnaJ"/>
    <property type="match status" value="1"/>
</dbReference>
<dbReference type="InterPro" id="IPR012724">
    <property type="entry name" value="DnaJ"/>
</dbReference>
<dbReference type="InterPro" id="IPR002939">
    <property type="entry name" value="DnaJ_C"/>
</dbReference>
<dbReference type="InterPro" id="IPR001623">
    <property type="entry name" value="DnaJ_domain"/>
</dbReference>
<dbReference type="InterPro" id="IPR018253">
    <property type="entry name" value="DnaJ_domain_CS"/>
</dbReference>
<dbReference type="InterPro" id="IPR008971">
    <property type="entry name" value="HSP40/DnaJ_pept-bd"/>
</dbReference>
<dbReference type="InterPro" id="IPR001305">
    <property type="entry name" value="HSP_DnaJ_Cys-rich_dom"/>
</dbReference>
<dbReference type="InterPro" id="IPR036410">
    <property type="entry name" value="HSP_DnaJ_Cys-rich_dom_sf"/>
</dbReference>
<dbReference type="InterPro" id="IPR036869">
    <property type="entry name" value="J_dom_sf"/>
</dbReference>
<dbReference type="PANTHER" id="PTHR43096:SF10">
    <property type="entry name" value="CHAPERONE PROTEIN DNAJ A6, CHLOROPLASTIC"/>
    <property type="match status" value="1"/>
</dbReference>
<dbReference type="PANTHER" id="PTHR43096">
    <property type="entry name" value="DNAJ HOMOLOG 1, MITOCHONDRIAL-RELATED"/>
    <property type="match status" value="1"/>
</dbReference>
<dbReference type="Pfam" id="PF00226">
    <property type="entry name" value="DnaJ"/>
    <property type="match status" value="1"/>
</dbReference>
<dbReference type="Pfam" id="PF01556">
    <property type="entry name" value="DnaJ_C"/>
    <property type="match status" value="1"/>
</dbReference>
<dbReference type="Pfam" id="PF00684">
    <property type="entry name" value="DnaJ_CXXCXGXG"/>
    <property type="match status" value="1"/>
</dbReference>
<dbReference type="PRINTS" id="PR00625">
    <property type="entry name" value="JDOMAIN"/>
</dbReference>
<dbReference type="SMART" id="SM00271">
    <property type="entry name" value="DnaJ"/>
    <property type="match status" value="1"/>
</dbReference>
<dbReference type="SUPFAM" id="SSF46565">
    <property type="entry name" value="Chaperone J-domain"/>
    <property type="match status" value="1"/>
</dbReference>
<dbReference type="SUPFAM" id="SSF57938">
    <property type="entry name" value="DnaJ/Hsp40 cysteine-rich domain"/>
    <property type="match status" value="1"/>
</dbReference>
<dbReference type="SUPFAM" id="SSF49493">
    <property type="entry name" value="HSP40/DnaJ peptide-binding domain"/>
    <property type="match status" value="2"/>
</dbReference>
<dbReference type="PROSITE" id="PS00636">
    <property type="entry name" value="DNAJ_1"/>
    <property type="match status" value="1"/>
</dbReference>
<dbReference type="PROSITE" id="PS50076">
    <property type="entry name" value="DNAJ_2"/>
    <property type="match status" value="1"/>
</dbReference>
<dbReference type="PROSITE" id="PS51188">
    <property type="entry name" value="ZF_CR"/>
    <property type="match status" value="1"/>
</dbReference>
<sequence>MEDLYGILGVDHNASVDEIRRAYRRLARELHPDINPDSADRFKAVTHAYNILSDPEQRQRYDRHVSGGFSSDFNLSDLFQSFFDTSAEFQRGSDLLVNIDIDLKTAIYGGSQVVKIDSLVVCDVCNGTRSEPGYKAEVCFDCNGSGVVRGEVRTTLGNLITQNTCSKCRGNGERIDHPCRRCYGNGSRSAPRDITINIPPGVETGMRIKIPNMGNAGGAMPGDLYVDCKVKEHPYFLRDGQDLYCRLDISLVDALLGTKVKIDSLDGELAVVIPALSQNRDVIRIANKGAVTLRGGKGDLCIVLNVLLMQKLDPEHRALLKKIMPNPPKPKLAKRTSGFFSWLKNKFT</sequence>
<accession>Q83MZ4</accession>
<comment type="function">
    <text evidence="1">Participates actively in the response to hyperosmotic and heat shock by preventing the aggregation of stress-denatured proteins and by disaggregating proteins, also in an autonomous, DnaK-independent fashion. Unfolded proteins bind initially to DnaJ; upon interaction with the DnaJ-bound protein, DnaK hydrolyzes its bound ATP, resulting in the formation of a stable complex. GrpE releases ADP from DnaK; ATP binding to DnaK triggers the release of the substrate protein, thus completing the reaction cycle. Several rounds of ATP-dependent interactions between DnaJ, DnaK and GrpE are required for fully efficient folding. Also involved, together with DnaK and GrpE, in the DNA replication of plasmids through activation of initiation proteins.</text>
</comment>
<comment type="cofactor">
    <cofactor evidence="1">
        <name>Zn(2+)</name>
        <dbReference type="ChEBI" id="CHEBI:29105"/>
    </cofactor>
    <text evidence="1">Binds 2 Zn(2+) ions per monomer.</text>
</comment>
<comment type="subunit">
    <text evidence="1">Homodimer.</text>
</comment>
<comment type="subcellular location">
    <subcellularLocation>
        <location evidence="1">Cytoplasm</location>
    </subcellularLocation>
</comment>
<comment type="domain">
    <text evidence="1">The J domain is necessary and sufficient to stimulate DnaK ATPase activity. Zinc center 1 plays an important role in the autonomous, DnaK-independent chaperone activity of DnaJ. Zinc center 2 is essential for interaction with DnaK and for DnaJ activity.</text>
</comment>
<comment type="similarity">
    <text evidence="1">Belongs to the DnaJ family.</text>
</comment>
<protein>
    <recommendedName>
        <fullName evidence="1">Chaperone protein DnaJ</fullName>
    </recommendedName>
</protein>
<reference key="1">
    <citation type="journal article" date="2003" name="Genome Res.">
        <title>Tropheryma whipplei twist: a human pathogenic Actinobacteria with a reduced genome.</title>
        <authorList>
            <person name="Raoult D."/>
            <person name="Ogata H."/>
            <person name="Audic S."/>
            <person name="Robert C."/>
            <person name="Suhre K."/>
            <person name="Drancourt M."/>
            <person name="Claverie J.-M."/>
        </authorList>
    </citation>
    <scope>NUCLEOTIDE SEQUENCE [LARGE SCALE GENOMIC DNA]</scope>
    <source>
        <strain>Twist</strain>
    </source>
</reference>
<gene>
    <name evidence="1" type="primary">dnaJ</name>
    <name type="ordered locus">TWT_280</name>
</gene>
<name>DNAJ_TROWT</name>
<proteinExistence type="inferred from homology"/>
<evidence type="ECO:0000255" key="1">
    <source>
        <dbReference type="HAMAP-Rule" id="MF_01152"/>
    </source>
</evidence>
<organism>
    <name type="scientific">Tropheryma whipplei (strain Twist)</name>
    <name type="common">Whipple's bacillus</name>
    <dbReference type="NCBI Taxonomy" id="203267"/>
    <lineage>
        <taxon>Bacteria</taxon>
        <taxon>Bacillati</taxon>
        <taxon>Actinomycetota</taxon>
        <taxon>Actinomycetes</taxon>
        <taxon>Micrococcales</taxon>
        <taxon>Tropherymataceae</taxon>
        <taxon>Tropheryma</taxon>
    </lineage>
</organism>